<organism>
    <name type="scientific">Saccharomyces cerevisiae (strain ATCC 204508 / S288c)</name>
    <name type="common">Baker's yeast</name>
    <dbReference type="NCBI Taxonomy" id="559292"/>
    <lineage>
        <taxon>Eukaryota</taxon>
        <taxon>Fungi</taxon>
        <taxon>Dikarya</taxon>
        <taxon>Ascomycota</taxon>
        <taxon>Saccharomycotina</taxon>
        <taxon>Saccharomycetes</taxon>
        <taxon>Saccharomycetales</taxon>
        <taxon>Saccharomycetaceae</taxon>
        <taxon>Saccharomyces</taxon>
    </lineage>
</organism>
<gene>
    <name type="primary">MSF1</name>
    <name type="ordered locus">YPR047W</name>
    <name type="ORF">YP9499.05</name>
</gene>
<keyword id="KW-0030">Aminoacyl-tRNA synthetase</keyword>
<keyword id="KW-0067">ATP-binding</keyword>
<keyword id="KW-0436">Ligase</keyword>
<keyword id="KW-0496">Mitochondrion</keyword>
<keyword id="KW-0547">Nucleotide-binding</keyword>
<keyword id="KW-0648">Protein biosynthesis</keyword>
<keyword id="KW-1185">Reference proteome</keyword>
<keyword id="KW-0809">Transit peptide</keyword>
<reference key="1">
    <citation type="journal article" date="1987" name="J. Biol. Chem.">
        <title>Isolation and characterization of the yeast gene coding for the alpha subunit of mitochondrial phenylalanyl-tRNA synthetase.</title>
        <authorList>
            <person name="Koerner T.J."/>
            <person name="Myers A.M."/>
            <person name="Lee S."/>
            <person name="Tzagoloff A."/>
        </authorList>
    </citation>
    <scope>NUCLEOTIDE SEQUENCE [GENOMIC DNA]</scope>
</reference>
<reference key="2">
    <citation type="journal article" date="1997" name="Nature">
        <title>The nucleotide sequence of Saccharomyces cerevisiae chromosome XVI.</title>
        <authorList>
            <person name="Bussey H."/>
            <person name="Storms R.K."/>
            <person name="Ahmed A."/>
            <person name="Albermann K."/>
            <person name="Allen E."/>
            <person name="Ansorge W."/>
            <person name="Araujo R."/>
            <person name="Aparicio A."/>
            <person name="Barrell B.G."/>
            <person name="Badcock K."/>
            <person name="Benes V."/>
            <person name="Botstein D."/>
            <person name="Bowman S."/>
            <person name="Brueckner M."/>
            <person name="Carpenter J."/>
            <person name="Cherry J.M."/>
            <person name="Chung E."/>
            <person name="Churcher C.M."/>
            <person name="Coster F."/>
            <person name="Davis K."/>
            <person name="Davis R.W."/>
            <person name="Dietrich F.S."/>
            <person name="Delius H."/>
            <person name="DiPaolo T."/>
            <person name="Dubois E."/>
            <person name="Duesterhoeft A."/>
            <person name="Duncan M."/>
            <person name="Floeth M."/>
            <person name="Fortin N."/>
            <person name="Friesen J.D."/>
            <person name="Fritz C."/>
            <person name="Goffeau A."/>
            <person name="Hall J."/>
            <person name="Hebling U."/>
            <person name="Heumann K."/>
            <person name="Hilbert H."/>
            <person name="Hillier L.W."/>
            <person name="Hunicke-Smith S."/>
            <person name="Hyman R.W."/>
            <person name="Johnston M."/>
            <person name="Kalman S."/>
            <person name="Kleine K."/>
            <person name="Komp C."/>
            <person name="Kurdi O."/>
            <person name="Lashkari D."/>
            <person name="Lew H."/>
            <person name="Lin A."/>
            <person name="Lin D."/>
            <person name="Louis E.J."/>
            <person name="Marathe R."/>
            <person name="Messenguy F."/>
            <person name="Mewes H.-W."/>
            <person name="Mirtipati S."/>
            <person name="Moestl D."/>
            <person name="Mueller-Auer S."/>
            <person name="Namath A."/>
            <person name="Nentwich U."/>
            <person name="Oefner P."/>
            <person name="Pearson D."/>
            <person name="Petel F.X."/>
            <person name="Pohl T.M."/>
            <person name="Purnelle B."/>
            <person name="Rajandream M.A."/>
            <person name="Rechmann S."/>
            <person name="Rieger M."/>
            <person name="Riles L."/>
            <person name="Roberts D."/>
            <person name="Schaefer M."/>
            <person name="Scharfe M."/>
            <person name="Scherens B."/>
            <person name="Schramm S."/>
            <person name="Schroeder M."/>
            <person name="Sdicu A.-M."/>
            <person name="Tettelin H."/>
            <person name="Urrestarazu L.A."/>
            <person name="Ushinsky S."/>
            <person name="Vierendeels F."/>
            <person name="Vissers S."/>
            <person name="Voss H."/>
            <person name="Walsh S.V."/>
            <person name="Wambutt R."/>
            <person name="Wang Y."/>
            <person name="Wedler E."/>
            <person name="Wedler H."/>
            <person name="Winnett E."/>
            <person name="Zhong W.-W."/>
            <person name="Zollner A."/>
            <person name="Vo D.H."/>
            <person name="Hani J."/>
        </authorList>
    </citation>
    <scope>NUCLEOTIDE SEQUENCE [LARGE SCALE GENOMIC DNA]</scope>
    <source>
        <strain>ATCC 204508 / S288c</strain>
    </source>
</reference>
<reference key="3">
    <citation type="journal article" date="2014" name="G3 (Bethesda)">
        <title>The reference genome sequence of Saccharomyces cerevisiae: Then and now.</title>
        <authorList>
            <person name="Engel S.R."/>
            <person name="Dietrich F.S."/>
            <person name="Fisk D.G."/>
            <person name="Binkley G."/>
            <person name="Balakrishnan R."/>
            <person name="Costanzo M.C."/>
            <person name="Dwight S.S."/>
            <person name="Hitz B.C."/>
            <person name="Karra K."/>
            <person name="Nash R.S."/>
            <person name="Weng S."/>
            <person name="Wong E.D."/>
            <person name="Lloyd P."/>
            <person name="Skrzypek M.S."/>
            <person name="Miyasato S.R."/>
            <person name="Simison M."/>
            <person name="Cherry J.M."/>
        </authorList>
    </citation>
    <scope>GENOME REANNOTATION</scope>
    <source>
        <strain>ATCC 204508 / S288c</strain>
    </source>
</reference>
<reference key="4">
    <citation type="journal article" date="1991" name="Proc. Natl. Acad. Sci. U.S.A.">
        <title>Evolution of aminoacyl-tRNA synthetase quaternary structure and activity: Saccharomyces cerevisiae mitochondrial phenylalanyl-tRNA synthetase.</title>
        <authorList>
            <person name="Sanni A."/>
            <person name="Walter P."/>
            <person name="Boulanger Y."/>
            <person name="Ebel J.-P."/>
            <person name="Fasiolo F."/>
        </authorList>
    </citation>
    <scope>CATALYTIC ACTIVITY</scope>
    <scope>SUBUNIT</scope>
</reference>
<reference key="5">
    <citation type="journal article" date="2003" name="Nature">
        <title>Sequencing and comparison of yeast species to identify genes and regulatory elements.</title>
        <authorList>
            <person name="Kellis M."/>
            <person name="Patterson N."/>
            <person name="Endrizzi M."/>
            <person name="Birren B.W."/>
            <person name="Lander E.S."/>
        </authorList>
    </citation>
    <scope>IDENTIFICATION OF PROBABLE INITIATION SITE</scope>
</reference>
<reference key="6">
    <citation type="journal article" date="2003" name="Nature">
        <title>Global analysis of protein localization in budding yeast.</title>
        <authorList>
            <person name="Huh W.-K."/>
            <person name="Falvo J.V."/>
            <person name="Gerke L.C."/>
            <person name="Carroll A.S."/>
            <person name="Howson R.W."/>
            <person name="Weissman J.S."/>
            <person name="O'Shea E.K."/>
        </authorList>
    </citation>
    <scope>SUBCELLULAR LOCATION [LARGE SCALE ANALYSIS]</scope>
</reference>
<reference key="7">
    <citation type="journal article" date="2003" name="Nature">
        <title>Global analysis of protein expression in yeast.</title>
        <authorList>
            <person name="Ghaemmaghami S."/>
            <person name="Huh W.-K."/>
            <person name="Bower K."/>
            <person name="Howson R.W."/>
            <person name="Belle A."/>
            <person name="Dephoure N."/>
            <person name="O'Shea E.K."/>
            <person name="Weissman J.S."/>
        </authorList>
    </citation>
    <scope>LEVEL OF PROTEIN EXPRESSION [LARGE SCALE ANALYSIS]</scope>
</reference>
<reference key="8">
    <citation type="journal article" date="2003" name="Proc. Natl. Acad. Sci. U.S.A.">
        <title>The proteome of Saccharomyces cerevisiae mitochondria.</title>
        <authorList>
            <person name="Sickmann A."/>
            <person name="Reinders J."/>
            <person name="Wagner Y."/>
            <person name="Joppich C."/>
            <person name="Zahedi R.P."/>
            <person name="Meyer H.E."/>
            <person name="Schoenfisch B."/>
            <person name="Perschil I."/>
            <person name="Chacinska A."/>
            <person name="Guiard B."/>
            <person name="Rehling P."/>
            <person name="Pfanner N."/>
            <person name="Meisinger C."/>
        </authorList>
    </citation>
    <scope>SUBCELLULAR LOCATION [LARGE SCALE ANALYSIS]</scope>
    <source>
        <strain>ATCC 76625 / YPH499</strain>
    </source>
</reference>
<name>SYFM_YEAST</name>
<accession>P08425</accession>
<accession>D6W455</accession>
<accession>Q12410</accession>
<sequence>MFLNRMMKTRTGLYRLYSTLKVPHVEINGIKYKTDPQTTNVTDSIIKLTDRSLHLKESHPVGILRDLIEKKLNSVDNTFKIFNNFKPVVTTMENFDSLGFPKDHPGRSKSDTYYINETHLLRTHTSAHELECFQKIRNDSDNIKSGFLISADVYRRDEIDKTHYPVFHQMEGATIWKRTKADVGVKEPMYIEKIREDIRQVENLLNKENVKITVDDDTIPLKENNPKQEYMSDLEVDLCSQHLKRSIELIVSEVFNKKISSMIKNKANNTPKELKVRWINAYFPWTAPSWEIEVWWQGEWLELCGCGLIRQDVLLRAGYKPSETIGWAFGLGLDRIAMLLFEIPDIRLLWSRDERFSRQFSKGLITSFKPYSKHPGSFRDVAFWLPEDKPDIHQVHENDLMEIIRNIAGDLVESVKLVDSFTHPKTGRKSMCYRINYQSMDRNLTNAEVNTLQDMVCSKLVKEYSVELR</sequence>
<comment type="function">
    <text>Is responsible for the charging of tRNA(Phe) with phenylalanine in mitochondrial translation.</text>
</comment>
<comment type="catalytic activity">
    <reaction evidence="6">
        <text>tRNA(Phe) + L-phenylalanine + ATP = L-phenylalanyl-tRNA(Phe) + AMP + diphosphate + H(+)</text>
        <dbReference type="Rhea" id="RHEA:19413"/>
        <dbReference type="Rhea" id="RHEA-COMP:9668"/>
        <dbReference type="Rhea" id="RHEA-COMP:9699"/>
        <dbReference type="ChEBI" id="CHEBI:15378"/>
        <dbReference type="ChEBI" id="CHEBI:30616"/>
        <dbReference type="ChEBI" id="CHEBI:33019"/>
        <dbReference type="ChEBI" id="CHEBI:58095"/>
        <dbReference type="ChEBI" id="CHEBI:78442"/>
        <dbReference type="ChEBI" id="CHEBI:78531"/>
        <dbReference type="ChEBI" id="CHEBI:456215"/>
        <dbReference type="EC" id="6.1.1.20"/>
    </reaction>
</comment>
<comment type="subunit">
    <text evidence="6">Monomer.</text>
</comment>
<comment type="subcellular location">
    <subcellularLocation>
        <location evidence="3 5">Mitochondrion matrix</location>
    </subcellularLocation>
</comment>
<comment type="miscellaneous">
    <text evidence="4">Present with 1800 molecules/cell in log phase SD medium.</text>
</comment>
<comment type="similarity">
    <text evidence="7">Belongs to the class-II aminoacyl-tRNA synthetase family.</text>
</comment>
<comment type="sequence caution" evidence="7">
    <conflict type="erroneous initiation">
        <sequence resource="EMBL-CDS" id="AAA34800"/>
    </conflict>
</comment>
<comment type="sequence caution" evidence="7">
    <conflict type="erroneous initiation">
        <sequence resource="EMBL-CDS" id="CAA89167"/>
    </conflict>
</comment>
<comment type="sequence caution" evidence="7">
    <conflict type="erroneous initiation">
        <sequence resource="EMBL-CDS" id="CAA94994"/>
    </conflict>
</comment>
<evidence type="ECO:0000250" key="1"/>
<evidence type="ECO:0000255" key="2">
    <source>
        <dbReference type="PROSITE-ProRule" id="PRU00778"/>
    </source>
</evidence>
<evidence type="ECO:0000269" key="3">
    <source>
    </source>
</evidence>
<evidence type="ECO:0000269" key="4">
    <source>
    </source>
</evidence>
<evidence type="ECO:0000269" key="5">
    <source>
    </source>
</evidence>
<evidence type="ECO:0000269" key="6">
    <source>
    </source>
</evidence>
<evidence type="ECO:0000305" key="7"/>
<feature type="transit peptide" description="Mitochondrion">
    <location>
        <begin position="1"/>
        <end position="17"/>
    </location>
</feature>
<feature type="chain" id="PRO_0000035817" description="Phenylalanine--tRNA ligase, mitochondrial">
    <location>
        <begin position="18"/>
        <end position="469"/>
    </location>
</feature>
<feature type="domain" description="FDX-ACB" evidence="2">
    <location>
        <begin position="372"/>
        <end position="469"/>
    </location>
</feature>
<feature type="binding site" evidence="1">
    <location>
        <begin position="126"/>
        <end position="129"/>
    </location>
    <ligand>
        <name>substrate</name>
    </ligand>
</feature>
<feature type="binding site" evidence="1">
    <location>
        <position position="155"/>
    </location>
    <ligand>
        <name>substrate</name>
    </ligand>
</feature>
<feature type="binding site" evidence="1">
    <location>
        <begin position="162"/>
        <end position="164"/>
    </location>
    <ligand>
        <name>substrate</name>
    </ligand>
</feature>
<feature type="binding site" evidence="1">
    <location>
        <begin position="169"/>
        <end position="171"/>
    </location>
    <ligand>
        <name>substrate</name>
    </ligand>
</feature>
<feature type="binding site" evidence="1">
    <location>
        <position position="302"/>
    </location>
    <ligand>
        <name>substrate</name>
    </ligand>
</feature>
<feature type="binding site" evidence="1">
    <location>
        <position position="329"/>
    </location>
    <ligand>
        <name>substrate</name>
    </ligand>
</feature>
<feature type="sequence conflict" description="In Ref. 1; AAA34800." evidence="7" ref="1">
    <original>K</original>
    <variation>E</variation>
    <location>
        <position position="86"/>
    </location>
</feature>
<feature type="sequence conflict" description="In Ref. 1; AAA34800." evidence="7" ref="1">
    <original>D</original>
    <variation>H</variation>
    <location>
        <position position="233"/>
    </location>
</feature>
<proteinExistence type="evidence at protein level"/>
<dbReference type="EC" id="6.1.1.20"/>
<dbReference type="EMBL" id="J02691">
    <property type="protein sequence ID" value="AAA34800.1"/>
    <property type="status" value="ALT_INIT"/>
    <property type="molecule type" value="Genomic_DNA"/>
</dbReference>
<dbReference type="EMBL" id="Z71255">
    <property type="protein sequence ID" value="CAA94994.1"/>
    <property type="status" value="ALT_INIT"/>
    <property type="molecule type" value="Genomic_DNA"/>
</dbReference>
<dbReference type="EMBL" id="Z49219">
    <property type="protein sequence ID" value="CAA89167.1"/>
    <property type="status" value="ALT_INIT"/>
    <property type="molecule type" value="Genomic_DNA"/>
</dbReference>
<dbReference type="EMBL" id="BK006949">
    <property type="protein sequence ID" value="DAA11471.1"/>
    <property type="molecule type" value="Genomic_DNA"/>
</dbReference>
<dbReference type="PIR" id="S54071">
    <property type="entry name" value="YFBYAM"/>
</dbReference>
<dbReference type="RefSeq" id="NP_015372.2">
    <property type="nucleotide sequence ID" value="NM_001184144.1"/>
</dbReference>
<dbReference type="SMR" id="P08425"/>
<dbReference type="BioGRID" id="36223">
    <property type="interactions" value="91"/>
</dbReference>
<dbReference type="DIP" id="DIP-3901N"/>
<dbReference type="FunCoup" id="P08425">
    <property type="interactions" value="881"/>
</dbReference>
<dbReference type="IntAct" id="P08425">
    <property type="interactions" value="2"/>
</dbReference>
<dbReference type="MINT" id="P08425"/>
<dbReference type="STRING" id="4932.YPR047W"/>
<dbReference type="PaxDb" id="4932-YPR047W"/>
<dbReference type="PeptideAtlas" id="P08425"/>
<dbReference type="EnsemblFungi" id="YPR047W_mRNA">
    <property type="protein sequence ID" value="YPR047W"/>
    <property type="gene ID" value="YPR047W"/>
</dbReference>
<dbReference type="GeneID" id="856160"/>
<dbReference type="KEGG" id="sce:YPR047W"/>
<dbReference type="AGR" id="SGD:S000006251"/>
<dbReference type="SGD" id="S000006251">
    <property type="gene designation" value="MSF1"/>
</dbReference>
<dbReference type="VEuPathDB" id="FungiDB:YPR047W"/>
<dbReference type="eggNOG" id="KOG2783">
    <property type="taxonomic scope" value="Eukaryota"/>
</dbReference>
<dbReference type="GeneTree" id="ENSGT00940000158071"/>
<dbReference type="HOGENOM" id="CLU_022696_0_1_1"/>
<dbReference type="InParanoid" id="P08425"/>
<dbReference type="OMA" id="PISHYPQ"/>
<dbReference type="OrthoDB" id="4457at2759"/>
<dbReference type="BioCyc" id="YEAST:G3O-34202-MONOMER"/>
<dbReference type="BioGRID-ORCS" id="856160">
    <property type="hits" value="0 hits in 10 CRISPR screens"/>
</dbReference>
<dbReference type="PRO" id="PR:P08425"/>
<dbReference type="Proteomes" id="UP000002311">
    <property type="component" value="Chromosome XVI"/>
</dbReference>
<dbReference type="RNAct" id="P08425">
    <property type="molecule type" value="protein"/>
</dbReference>
<dbReference type="GO" id="GO:0005737">
    <property type="term" value="C:cytoplasm"/>
    <property type="evidence" value="ECO:0000318"/>
    <property type="project" value="GO_Central"/>
</dbReference>
<dbReference type="GO" id="GO:0005759">
    <property type="term" value="C:mitochondrial matrix"/>
    <property type="evidence" value="ECO:0007669"/>
    <property type="project" value="UniProtKB-SubCell"/>
</dbReference>
<dbReference type="GO" id="GO:0005739">
    <property type="term" value="C:mitochondrion"/>
    <property type="evidence" value="ECO:0000314"/>
    <property type="project" value="UniProtKB"/>
</dbReference>
<dbReference type="GO" id="GO:0005524">
    <property type="term" value="F:ATP binding"/>
    <property type="evidence" value="ECO:0007669"/>
    <property type="project" value="UniProtKB-KW"/>
</dbReference>
<dbReference type="GO" id="GO:0004826">
    <property type="term" value="F:phenylalanine-tRNA ligase activity"/>
    <property type="evidence" value="ECO:0000314"/>
    <property type="project" value="UniProtKB"/>
</dbReference>
<dbReference type="GO" id="GO:0000049">
    <property type="term" value="F:tRNA binding"/>
    <property type="evidence" value="ECO:0007669"/>
    <property type="project" value="InterPro"/>
</dbReference>
<dbReference type="GO" id="GO:0070156">
    <property type="term" value="P:mitochondrial phenylalanyl-tRNA aminoacylation"/>
    <property type="evidence" value="ECO:0000315"/>
    <property type="project" value="SGD"/>
</dbReference>
<dbReference type="GO" id="GO:0006432">
    <property type="term" value="P:phenylalanyl-tRNA aminoacylation"/>
    <property type="evidence" value="ECO:0000314"/>
    <property type="project" value="UniProtKB"/>
</dbReference>
<dbReference type="CDD" id="cd00496">
    <property type="entry name" value="PheRS_alpha_core"/>
    <property type="match status" value="1"/>
</dbReference>
<dbReference type="FunFam" id="3.30.70.380:FF:000002">
    <property type="entry name" value="phenylalanine--tRNA ligase, mitochondrial"/>
    <property type="match status" value="1"/>
</dbReference>
<dbReference type="FunFam" id="3.30.930.10:FF:000053">
    <property type="entry name" value="Phenylalanyl-tRNA synthetase mitochondrial"/>
    <property type="match status" value="1"/>
</dbReference>
<dbReference type="Gene3D" id="3.30.930.10">
    <property type="entry name" value="Bira Bifunctional Protein, Domain 2"/>
    <property type="match status" value="1"/>
</dbReference>
<dbReference type="Gene3D" id="3.30.70.380">
    <property type="entry name" value="Ferrodoxin-fold anticodon-binding domain"/>
    <property type="match status" value="1"/>
</dbReference>
<dbReference type="InterPro" id="IPR006195">
    <property type="entry name" value="aa-tRNA-synth_II"/>
</dbReference>
<dbReference type="InterPro" id="IPR045864">
    <property type="entry name" value="aa-tRNA-synth_II/BPL/LPL"/>
</dbReference>
<dbReference type="InterPro" id="IPR005121">
    <property type="entry name" value="Fdx_antiC-bd"/>
</dbReference>
<dbReference type="InterPro" id="IPR036690">
    <property type="entry name" value="Fdx_antiC-bd_sf"/>
</dbReference>
<dbReference type="InterPro" id="IPR004530">
    <property type="entry name" value="Phe-tRNA-synth_IIc_mito"/>
</dbReference>
<dbReference type="InterPro" id="IPR002319">
    <property type="entry name" value="Phenylalanyl-tRNA_Synthase"/>
</dbReference>
<dbReference type="NCBIfam" id="TIGR00469">
    <property type="entry name" value="pheS_mito"/>
    <property type="match status" value="1"/>
</dbReference>
<dbReference type="PANTHER" id="PTHR11538:SF41">
    <property type="entry name" value="PHENYLALANINE--TRNA LIGASE, MITOCHONDRIAL"/>
    <property type="match status" value="1"/>
</dbReference>
<dbReference type="PANTHER" id="PTHR11538">
    <property type="entry name" value="PHENYLALANYL-TRNA SYNTHETASE"/>
    <property type="match status" value="1"/>
</dbReference>
<dbReference type="Pfam" id="PF03147">
    <property type="entry name" value="FDX-ACB"/>
    <property type="match status" value="1"/>
</dbReference>
<dbReference type="Pfam" id="PF01409">
    <property type="entry name" value="tRNA-synt_2d"/>
    <property type="match status" value="2"/>
</dbReference>
<dbReference type="SMART" id="SM00896">
    <property type="entry name" value="FDX-ACB"/>
    <property type="match status" value="1"/>
</dbReference>
<dbReference type="SUPFAM" id="SSF54991">
    <property type="entry name" value="Anticodon-binding domain of PheRS"/>
    <property type="match status" value="1"/>
</dbReference>
<dbReference type="SUPFAM" id="SSF55681">
    <property type="entry name" value="Class II aaRS and biotin synthetases"/>
    <property type="match status" value="1"/>
</dbReference>
<dbReference type="PROSITE" id="PS50862">
    <property type="entry name" value="AA_TRNA_LIGASE_II"/>
    <property type="match status" value="1"/>
</dbReference>
<dbReference type="PROSITE" id="PS51447">
    <property type="entry name" value="FDX_ACB"/>
    <property type="match status" value="1"/>
</dbReference>
<protein>
    <recommendedName>
        <fullName>Phenylalanine--tRNA ligase, mitochondrial</fullName>
        <ecNumber>6.1.1.20</ecNumber>
    </recommendedName>
    <alternativeName>
        <fullName>Phenylalanyl-tRNA synthetase</fullName>
        <shortName>PheRS</shortName>
    </alternativeName>
</protein>